<name>METAS_BRAJP</name>
<evidence type="ECO:0000255" key="1">
    <source>
        <dbReference type="HAMAP-Rule" id="MF_00295"/>
    </source>
</evidence>
<evidence type="ECO:0000269" key="2">
    <source>
    </source>
</evidence>
<evidence type="ECO:0000303" key="3">
    <source>
    </source>
</evidence>
<evidence type="ECO:0000312" key="4">
    <source>
        <dbReference type="EMBL" id="SCN13861.1"/>
    </source>
</evidence>
<dbReference type="EC" id="2.3.1.46" evidence="1 2"/>
<dbReference type="EMBL" id="LT613637">
    <property type="protein sequence ID" value="SCN13861.1"/>
    <property type="molecule type" value="Genomic_DNA"/>
</dbReference>
<dbReference type="SMR" id="A0A1D3PCJ5"/>
<dbReference type="UniPathway" id="UPA00051">
    <property type="reaction ID" value="UER00075"/>
</dbReference>
<dbReference type="GO" id="GO:0005737">
    <property type="term" value="C:cytoplasm"/>
    <property type="evidence" value="ECO:0007669"/>
    <property type="project" value="UniProtKB-SubCell"/>
</dbReference>
<dbReference type="GO" id="GO:0004414">
    <property type="term" value="F:homoserine O-acetyltransferase activity"/>
    <property type="evidence" value="ECO:0007669"/>
    <property type="project" value="UniProtKB-UniRule"/>
</dbReference>
<dbReference type="GO" id="GO:0008899">
    <property type="term" value="F:homoserine O-succinyltransferase activity"/>
    <property type="evidence" value="ECO:0007669"/>
    <property type="project" value="UniProtKB-EC"/>
</dbReference>
<dbReference type="GO" id="GO:0009086">
    <property type="term" value="P:methionine biosynthetic process"/>
    <property type="evidence" value="ECO:0007669"/>
    <property type="project" value="UniProtKB-UniRule"/>
</dbReference>
<dbReference type="Gene3D" id="3.40.50.880">
    <property type="match status" value="1"/>
</dbReference>
<dbReference type="HAMAP" id="MF_00295">
    <property type="entry name" value="MetA_acyltransf"/>
    <property type="match status" value="1"/>
</dbReference>
<dbReference type="InterPro" id="IPR029062">
    <property type="entry name" value="Class_I_gatase-like"/>
</dbReference>
<dbReference type="InterPro" id="IPR033752">
    <property type="entry name" value="MetA_family"/>
</dbReference>
<dbReference type="NCBIfam" id="NF003776">
    <property type="entry name" value="PRK05368.1-3"/>
    <property type="match status" value="1"/>
</dbReference>
<dbReference type="PANTHER" id="PTHR20919">
    <property type="entry name" value="HOMOSERINE O-SUCCINYLTRANSFERASE"/>
    <property type="match status" value="1"/>
</dbReference>
<dbReference type="PANTHER" id="PTHR20919:SF0">
    <property type="entry name" value="HOMOSERINE O-SUCCINYLTRANSFERASE"/>
    <property type="match status" value="1"/>
</dbReference>
<dbReference type="Pfam" id="PF04204">
    <property type="entry name" value="HTS"/>
    <property type="match status" value="1"/>
</dbReference>
<dbReference type="PIRSF" id="PIRSF000450">
    <property type="entry name" value="H_ser_succinyltr"/>
    <property type="match status" value="1"/>
</dbReference>
<dbReference type="SUPFAM" id="SSF52317">
    <property type="entry name" value="Class I glutamine amidotransferase-like"/>
    <property type="match status" value="1"/>
</dbReference>
<accession>A0A1D3PCJ5</accession>
<keyword id="KW-0012">Acyltransferase</keyword>
<keyword id="KW-0028">Amino-acid biosynthesis</keyword>
<keyword id="KW-0963">Cytoplasm</keyword>
<keyword id="KW-0486">Methionine biosynthesis</keyword>
<keyword id="KW-0808">Transferase</keyword>
<reference key="1">
    <citation type="journal article" date="2017" name="Nat. Chem. Biol.">
        <title>Parallel evolution of non-homologous isofunctional enzymes in methionine biosynthesis.</title>
        <authorList>
            <person name="Bastard K."/>
            <person name="Perret A."/>
            <person name="Mariage A."/>
            <person name="Bessonnet T."/>
            <person name="Pinet-Turpault A."/>
            <person name="Petit J.L."/>
            <person name="Darii E."/>
            <person name="Bazire P."/>
            <person name="Vergne-Vaxelaire C."/>
            <person name="Brewee C."/>
            <person name="Debard A."/>
            <person name="Pellouin V."/>
            <person name="Besnard-Gonnet M."/>
            <person name="Artiguenave F."/>
            <person name="Medigue C."/>
            <person name="Vallenet D."/>
            <person name="Danchin A."/>
            <person name="Zaparucha A."/>
            <person name="Weissenbach J."/>
            <person name="Salanoubat M."/>
            <person name="de Berardinis V."/>
        </authorList>
    </citation>
    <scope>NUCLEOTIDE SEQUENCE [GENOMIC DNA]</scope>
    <scope>FUNCTION</scope>
    <scope>CATALYTIC ACTIVITY</scope>
    <source>
        <strain>DSM 30131</strain>
    </source>
</reference>
<comment type="function">
    <text evidence="1 2">Transfers a succinyl group from succinyl-CoA to L-homoserine, forming succinyl-L-homoserine.</text>
</comment>
<comment type="catalytic activity">
    <reaction evidence="1 2">
        <text>L-homoserine + succinyl-CoA = O-succinyl-L-homoserine + CoA</text>
        <dbReference type="Rhea" id="RHEA:22008"/>
        <dbReference type="ChEBI" id="CHEBI:57287"/>
        <dbReference type="ChEBI" id="CHEBI:57292"/>
        <dbReference type="ChEBI" id="CHEBI:57476"/>
        <dbReference type="ChEBI" id="CHEBI:57661"/>
        <dbReference type="EC" id="2.3.1.46"/>
    </reaction>
</comment>
<comment type="pathway">
    <text evidence="1">Amino-acid biosynthesis; L-methionine biosynthesis via de novo pathway; O-succinyl-L-homoserine from L-homoserine: step 1/1.</text>
</comment>
<comment type="subcellular location">
    <subcellularLocation>
        <location evidence="1">Cytoplasm</location>
    </subcellularLocation>
</comment>
<comment type="similarity">
    <text evidence="1">Belongs to the MetA family.</text>
</comment>
<sequence>MTLLFDGDRRIKSPALAPAGGDRRARDPIELTIGLVNNMPDSALKATDVQIARLLQQAAPWHVRIRLHCFSLPSIARSPMASSHVAQTYTDIDRLDGLDIDGLIVTGAEPVAARLRDESYWPDLAAIVDWARTNTKTTIWSCLAAHAAVLHLDDIERQRLASKCSGVFDCVKVRDDWLTHGIDAPLQVPHSRLNAVNEPLLAERGYDILTRSAEVGVDIFARTMPSRFVFFQGHPEYDALSLQREYMRDIARYLAGQREDYPRPPRSYFSAESEAVLNTFEIRARARRDPTLAAELPGLTLRPDLAAGHAAKLLFRNWIGYLADG</sequence>
<feature type="chain" id="PRO_0000440349" description="Homoserine O-succinyltransferase">
    <location>
        <begin position="1"/>
        <end position="325"/>
    </location>
</feature>
<feature type="active site" description="Acyl-thioester intermediate" evidence="1">
    <location>
        <position position="142"/>
    </location>
</feature>
<feature type="active site" description="Proton acceptor" evidence="1">
    <location>
        <position position="234"/>
    </location>
</feature>
<feature type="active site" evidence="1">
    <location>
        <position position="236"/>
    </location>
</feature>
<feature type="binding site" evidence="1">
    <location>
        <position position="163"/>
    </location>
    <ligand>
        <name>substrate</name>
    </ligand>
</feature>
<feature type="binding site" evidence="1">
    <location>
        <position position="191"/>
    </location>
    <ligand>
        <name>substrate</name>
    </ligand>
</feature>
<feature type="binding site" evidence="1">
    <location>
        <position position="248"/>
    </location>
    <ligand>
        <name>substrate</name>
    </ligand>
</feature>
<feature type="site" description="Important for acyl-CoA specificity" evidence="1">
    <location>
        <position position="109"/>
    </location>
</feature>
<feature type="site" description="Important for acyl-CoA specificity" evidence="1">
    <location>
        <position position="143"/>
    </location>
</feature>
<feature type="site" description="Important for substrate specificity" evidence="1">
    <location>
        <position position="191"/>
    </location>
</feature>
<gene>
    <name evidence="1 3" type="primary">metAS</name>
    <name evidence="4" type="synonym">metA</name>
</gene>
<protein>
    <recommendedName>
        <fullName evidence="1">Homoserine O-succinyltransferase</fullName>
        <shortName evidence="1 3">HST</shortName>
        <ecNumber evidence="1 2">2.3.1.46</ecNumber>
    </recommendedName>
    <alternativeName>
        <fullName evidence="1">Homoserine transsuccinylase</fullName>
        <shortName evidence="1">HTS</shortName>
    </alternativeName>
</protein>
<organism>
    <name type="scientific">Bradyrhizobium japonicum</name>
    <dbReference type="NCBI Taxonomy" id="375"/>
    <lineage>
        <taxon>Bacteria</taxon>
        <taxon>Pseudomonadati</taxon>
        <taxon>Pseudomonadota</taxon>
        <taxon>Alphaproteobacteria</taxon>
        <taxon>Hyphomicrobiales</taxon>
        <taxon>Nitrobacteraceae</taxon>
        <taxon>Bradyrhizobium</taxon>
    </lineage>
</organism>
<proteinExistence type="evidence at protein level"/>